<proteinExistence type="inferred from homology"/>
<reference key="1">
    <citation type="journal article" date="2002" name="Nature">
        <title>Genome sequence of the plant pathogen Ralstonia solanacearum.</title>
        <authorList>
            <person name="Salanoubat M."/>
            <person name="Genin S."/>
            <person name="Artiguenave F."/>
            <person name="Gouzy J."/>
            <person name="Mangenot S."/>
            <person name="Arlat M."/>
            <person name="Billault A."/>
            <person name="Brottier P."/>
            <person name="Camus J.-C."/>
            <person name="Cattolico L."/>
            <person name="Chandler M."/>
            <person name="Choisne N."/>
            <person name="Claudel-Renard C."/>
            <person name="Cunnac S."/>
            <person name="Demange N."/>
            <person name="Gaspin C."/>
            <person name="Lavie M."/>
            <person name="Moisan A."/>
            <person name="Robert C."/>
            <person name="Saurin W."/>
            <person name="Schiex T."/>
            <person name="Siguier P."/>
            <person name="Thebault P."/>
            <person name="Whalen M."/>
            <person name="Wincker P."/>
            <person name="Levy M."/>
            <person name="Weissenbach J."/>
            <person name="Boucher C.A."/>
        </authorList>
    </citation>
    <scope>NUCLEOTIDE SEQUENCE [LARGE SCALE GENOMIC DNA]</scope>
    <source>
        <strain>ATCC BAA-1114 / GMI1000</strain>
    </source>
</reference>
<comment type="function">
    <text evidence="1">NDH-1 shuttles electrons from NADH, via FMN and iron-sulfur (Fe-S) centers, to quinones in the respiratory chain. The immediate electron acceptor for the enzyme in this species is believed to be ubiquinone. Couples the redox reaction to proton translocation (for every two electrons transferred, four hydrogen ions are translocated across the cytoplasmic membrane), and thus conserves the redox energy in a proton gradient.</text>
</comment>
<comment type="catalytic activity">
    <reaction evidence="1">
        <text>a quinone + NADH + 5 H(+)(in) = a quinol + NAD(+) + 4 H(+)(out)</text>
        <dbReference type="Rhea" id="RHEA:57888"/>
        <dbReference type="ChEBI" id="CHEBI:15378"/>
        <dbReference type="ChEBI" id="CHEBI:24646"/>
        <dbReference type="ChEBI" id="CHEBI:57540"/>
        <dbReference type="ChEBI" id="CHEBI:57945"/>
        <dbReference type="ChEBI" id="CHEBI:132124"/>
    </reaction>
</comment>
<comment type="cofactor">
    <cofactor evidence="1">
        <name>[4Fe-4S] cluster</name>
        <dbReference type="ChEBI" id="CHEBI:49883"/>
    </cofactor>
    <text evidence="1">Binds 2 [4Fe-4S] clusters per subunit.</text>
</comment>
<comment type="subunit">
    <text evidence="1">NDH-1 is composed of 14 different subunits. Subunits NuoA, H, J, K, L, M, N constitute the membrane sector of the complex.</text>
</comment>
<comment type="subcellular location">
    <subcellularLocation>
        <location evidence="1">Cell inner membrane</location>
        <topology evidence="1">Peripheral membrane protein</topology>
    </subcellularLocation>
</comment>
<comment type="similarity">
    <text evidence="1">Belongs to the complex I 23 kDa subunit family.</text>
</comment>
<sequence length="163" mass="18616">MLLAIKEFFNSLLLKELFKGLALTGRYLFARKITVLFPEEKTPLSPRFRGLHALRRYPNGEERCIACKLCEAVCPALAITIESDQRDDGTRRTTRYDIDLTKCIFCGFCEEACPVDAIVETHILEYHGEKRGDLYFTKDMLLAVGDRFEPEIAANKAADAKYR</sequence>
<keyword id="KW-0004">4Fe-4S</keyword>
<keyword id="KW-0997">Cell inner membrane</keyword>
<keyword id="KW-1003">Cell membrane</keyword>
<keyword id="KW-0408">Iron</keyword>
<keyword id="KW-0411">Iron-sulfur</keyword>
<keyword id="KW-0472">Membrane</keyword>
<keyword id="KW-0479">Metal-binding</keyword>
<keyword id="KW-0520">NAD</keyword>
<keyword id="KW-0874">Quinone</keyword>
<keyword id="KW-1185">Reference proteome</keyword>
<keyword id="KW-0677">Repeat</keyword>
<keyword id="KW-1278">Translocase</keyword>
<keyword id="KW-0830">Ubiquinone</keyword>
<organism>
    <name type="scientific">Ralstonia nicotianae (strain ATCC BAA-1114 / GMI1000)</name>
    <name type="common">Ralstonia solanacearum</name>
    <dbReference type="NCBI Taxonomy" id="267608"/>
    <lineage>
        <taxon>Bacteria</taxon>
        <taxon>Pseudomonadati</taxon>
        <taxon>Pseudomonadota</taxon>
        <taxon>Betaproteobacteria</taxon>
        <taxon>Burkholderiales</taxon>
        <taxon>Burkholderiaceae</taxon>
        <taxon>Ralstonia</taxon>
        <taxon>Ralstonia solanacearum species complex</taxon>
    </lineage>
</organism>
<feature type="chain" id="PRO_0000250927" description="NADH-quinone oxidoreductase subunit I">
    <location>
        <begin position="1"/>
        <end position="163"/>
    </location>
</feature>
<feature type="domain" description="4Fe-4S ferredoxin-type 1" evidence="1">
    <location>
        <begin position="54"/>
        <end position="84"/>
    </location>
</feature>
<feature type="domain" description="4Fe-4S ferredoxin-type 2" evidence="1">
    <location>
        <begin position="94"/>
        <end position="123"/>
    </location>
</feature>
<feature type="binding site" evidence="1">
    <location>
        <position position="64"/>
    </location>
    <ligand>
        <name>[4Fe-4S] cluster</name>
        <dbReference type="ChEBI" id="CHEBI:49883"/>
        <label>1</label>
    </ligand>
</feature>
<feature type="binding site" evidence="1">
    <location>
        <position position="67"/>
    </location>
    <ligand>
        <name>[4Fe-4S] cluster</name>
        <dbReference type="ChEBI" id="CHEBI:49883"/>
        <label>1</label>
    </ligand>
</feature>
<feature type="binding site" evidence="1">
    <location>
        <position position="70"/>
    </location>
    <ligand>
        <name>[4Fe-4S] cluster</name>
        <dbReference type="ChEBI" id="CHEBI:49883"/>
        <label>1</label>
    </ligand>
</feature>
<feature type="binding site" evidence="1">
    <location>
        <position position="74"/>
    </location>
    <ligand>
        <name>[4Fe-4S] cluster</name>
        <dbReference type="ChEBI" id="CHEBI:49883"/>
        <label>2</label>
    </ligand>
</feature>
<feature type="binding site" evidence="1">
    <location>
        <position position="103"/>
    </location>
    <ligand>
        <name>[4Fe-4S] cluster</name>
        <dbReference type="ChEBI" id="CHEBI:49883"/>
        <label>2</label>
    </ligand>
</feature>
<feature type="binding site" evidence="1">
    <location>
        <position position="106"/>
    </location>
    <ligand>
        <name>[4Fe-4S] cluster</name>
        <dbReference type="ChEBI" id="CHEBI:49883"/>
        <label>2</label>
    </ligand>
</feature>
<feature type="binding site" evidence="1">
    <location>
        <position position="109"/>
    </location>
    <ligand>
        <name>[4Fe-4S] cluster</name>
        <dbReference type="ChEBI" id="CHEBI:49883"/>
        <label>2</label>
    </ligand>
</feature>
<feature type="binding site" evidence="1">
    <location>
        <position position="113"/>
    </location>
    <ligand>
        <name>[4Fe-4S] cluster</name>
        <dbReference type="ChEBI" id="CHEBI:49883"/>
        <label>1</label>
    </ligand>
</feature>
<protein>
    <recommendedName>
        <fullName evidence="1">NADH-quinone oxidoreductase subunit I</fullName>
        <ecNumber evidence="1">7.1.1.-</ecNumber>
    </recommendedName>
    <alternativeName>
        <fullName evidence="1">NADH dehydrogenase I subunit I</fullName>
    </alternativeName>
    <alternativeName>
        <fullName evidence="1">NDH-1 subunit I</fullName>
    </alternativeName>
</protein>
<gene>
    <name evidence="1" type="primary">nuoI</name>
    <name type="ordered locus">RSc2054</name>
</gene>
<name>NUOI_RALN1</name>
<accession>Q8XXQ9</accession>
<evidence type="ECO:0000255" key="1">
    <source>
        <dbReference type="HAMAP-Rule" id="MF_01351"/>
    </source>
</evidence>
<dbReference type="EC" id="7.1.1.-" evidence="1"/>
<dbReference type="EMBL" id="AL646052">
    <property type="protein sequence ID" value="CAD15761.1"/>
    <property type="molecule type" value="Genomic_DNA"/>
</dbReference>
<dbReference type="RefSeq" id="WP_003261939.1">
    <property type="nucleotide sequence ID" value="NC_003295.1"/>
</dbReference>
<dbReference type="SMR" id="Q8XXQ9"/>
<dbReference type="STRING" id="267608.RSc2054"/>
<dbReference type="EnsemblBacteria" id="CAD15761">
    <property type="protein sequence ID" value="CAD15761"/>
    <property type="gene ID" value="RSc2054"/>
</dbReference>
<dbReference type="GeneID" id="93853094"/>
<dbReference type="KEGG" id="rso:RSc2054"/>
<dbReference type="eggNOG" id="COG1143">
    <property type="taxonomic scope" value="Bacteria"/>
</dbReference>
<dbReference type="HOGENOM" id="CLU_067218_5_1_4"/>
<dbReference type="Proteomes" id="UP000001436">
    <property type="component" value="Chromosome"/>
</dbReference>
<dbReference type="GO" id="GO:0005886">
    <property type="term" value="C:plasma membrane"/>
    <property type="evidence" value="ECO:0007669"/>
    <property type="project" value="UniProtKB-SubCell"/>
</dbReference>
<dbReference type="GO" id="GO:0051539">
    <property type="term" value="F:4 iron, 4 sulfur cluster binding"/>
    <property type="evidence" value="ECO:0007669"/>
    <property type="project" value="UniProtKB-KW"/>
</dbReference>
<dbReference type="GO" id="GO:0005506">
    <property type="term" value="F:iron ion binding"/>
    <property type="evidence" value="ECO:0007669"/>
    <property type="project" value="UniProtKB-UniRule"/>
</dbReference>
<dbReference type="GO" id="GO:0050136">
    <property type="term" value="F:NADH:ubiquinone reductase (non-electrogenic) activity"/>
    <property type="evidence" value="ECO:0007669"/>
    <property type="project" value="UniProtKB-UniRule"/>
</dbReference>
<dbReference type="GO" id="GO:0048038">
    <property type="term" value="F:quinone binding"/>
    <property type="evidence" value="ECO:0007669"/>
    <property type="project" value="UniProtKB-KW"/>
</dbReference>
<dbReference type="GO" id="GO:0009060">
    <property type="term" value="P:aerobic respiration"/>
    <property type="evidence" value="ECO:0007669"/>
    <property type="project" value="TreeGrafter"/>
</dbReference>
<dbReference type="FunFam" id="3.30.70.3270:FF:000003">
    <property type="entry name" value="NADH-quinone oxidoreductase subunit I"/>
    <property type="match status" value="1"/>
</dbReference>
<dbReference type="Gene3D" id="3.30.70.3270">
    <property type="match status" value="1"/>
</dbReference>
<dbReference type="HAMAP" id="MF_01351">
    <property type="entry name" value="NDH1_NuoI"/>
    <property type="match status" value="1"/>
</dbReference>
<dbReference type="InterPro" id="IPR017896">
    <property type="entry name" value="4Fe4S_Fe-S-bd"/>
</dbReference>
<dbReference type="InterPro" id="IPR017900">
    <property type="entry name" value="4Fe4S_Fe_S_CS"/>
</dbReference>
<dbReference type="InterPro" id="IPR010226">
    <property type="entry name" value="NADH_quinone_OxRdtase_chainI"/>
</dbReference>
<dbReference type="NCBIfam" id="TIGR01971">
    <property type="entry name" value="NuoI"/>
    <property type="match status" value="1"/>
</dbReference>
<dbReference type="NCBIfam" id="NF004538">
    <property type="entry name" value="PRK05888.1-4"/>
    <property type="match status" value="1"/>
</dbReference>
<dbReference type="NCBIfam" id="NF004539">
    <property type="entry name" value="PRK05888.1-5"/>
    <property type="match status" value="1"/>
</dbReference>
<dbReference type="PANTHER" id="PTHR10849:SF20">
    <property type="entry name" value="NADH DEHYDROGENASE [UBIQUINONE] IRON-SULFUR PROTEIN 8, MITOCHONDRIAL"/>
    <property type="match status" value="1"/>
</dbReference>
<dbReference type="PANTHER" id="PTHR10849">
    <property type="entry name" value="NADH DEHYDROGENASE UBIQUINONE IRON-SULFUR PROTEIN 8, MITOCHONDRIAL"/>
    <property type="match status" value="1"/>
</dbReference>
<dbReference type="Pfam" id="PF12838">
    <property type="entry name" value="Fer4_7"/>
    <property type="match status" value="1"/>
</dbReference>
<dbReference type="SUPFAM" id="SSF54862">
    <property type="entry name" value="4Fe-4S ferredoxins"/>
    <property type="match status" value="1"/>
</dbReference>
<dbReference type="PROSITE" id="PS00198">
    <property type="entry name" value="4FE4S_FER_1"/>
    <property type="match status" value="2"/>
</dbReference>
<dbReference type="PROSITE" id="PS51379">
    <property type="entry name" value="4FE4S_FER_2"/>
    <property type="match status" value="2"/>
</dbReference>